<protein>
    <recommendedName>
        <fullName>Lysozyme</fullName>
        <ecNumber>3.2.1.17</ecNumber>
    </recommendedName>
    <alternativeName>
        <fullName>1,4-beta-N-acetylmuramidase</fullName>
    </alternativeName>
</protein>
<reference key="1">
    <citation type="journal article" date="1991" name="J. Biol. Chem.">
        <title>Organization and expression of the immunoresponsive lysozyme gene in the giant silk moth, Hyalophora cecropia.</title>
        <authorList>
            <person name="Sun S.-C."/>
            <person name="Aasling B."/>
            <person name="Faye I."/>
        </authorList>
    </citation>
    <scope>NUCLEOTIDE SEQUENCE [GENOMIC DNA]</scope>
</reference>
<reference key="2">
    <citation type="journal article" date="1985" name="EMBO J.">
        <title>Amino acid and cDNA sequences of lysozyme from Hyalophora cecropia.</title>
        <authorList>
            <person name="Engstroem A."/>
            <person name="Xanthopoulos K.G."/>
            <person name="Boman H.G."/>
            <person name="Bennich H."/>
        </authorList>
    </citation>
    <scope>NUCLEOTIDE SEQUENCE OF 13-139</scope>
    <scope>POLYMORPHISM</scope>
</reference>
<reference key="3">
    <citation type="journal article" date="1985" name="Dev. Comp. Immunol.">
        <title>On the primary structures of lysozyme, cecropins and attacins from Hyalophora cecropia.</title>
        <authorList>
            <person name="Boman H.G."/>
            <person name="Faye I."/>
            <person name="von Hofsten P."/>
            <person name="Kockum K."/>
            <person name="Lee J.-Y."/>
            <person name="Xanthopoulos K.G."/>
            <person name="Bennich H."/>
            <person name="Engstroem A."/>
            <person name="Merrifield R.B."/>
            <person name="Andreu D."/>
        </authorList>
    </citation>
    <scope>NUCLEOTIDE SEQUENCE OF 13-139</scope>
</reference>
<accession>P05105</accession>
<organism>
    <name type="scientific">Hyalophora cecropia</name>
    <name type="common">Cecropia moth</name>
    <name type="synonym">Samia cecropia</name>
    <dbReference type="NCBI Taxonomy" id="7123"/>
    <lineage>
        <taxon>Eukaryota</taxon>
        <taxon>Metazoa</taxon>
        <taxon>Ecdysozoa</taxon>
        <taxon>Arthropoda</taxon>
        <taxon>Hexapoda</taxon>
        <taxon>Insecta</taxon>
        <taxon>Pterygota</taxon>
        <taxon>Neoptera</taxon>
        <taxon>Endopterygota</taxon>
        <taxon>Lepidoptera</taxon>
        <taxon>Glossata</taxon>
        <taxon>Ditrysia</taxon>
        <taxon>Bombycoidea</taxon>
        <taxon>Saturniidae</taxon>
        <taxon>Saturniinae</taxon>
        <taxon>Attacini</taxon>
        <taxon>Hyalophora</taxon>
    </lineage>
</organism>
<name>LYS_HYACE</name>
<keyword id="KW-0929">Antimicrobial</keyword>
<keyword id="KW-0081">Bacteriolytic enzyme</keyword>
<keyword id="KW-1015">Disulfide bond</keyword>
<keyword id="KW-0326">Glycosidase</keyword>
<keyword id="KW-0378">Hydrolase</keyword>
<keyword id="KW-0732">Signal</keyword>
<comment type="function">
    <text>Lysozymes have primarily a bacteriolytic function; those in tissues and body fluids are associated with the monocyte-macrophage system and enhance the activity of immunoagents.</text>
</comment>
<comment type="catalytic activity">
    <reaction>
        <text>Hydrolysis of (1-&gt;4)-beta-linkages between N-acetylmuramic acid and N-acetyl-D-glucosamine residues in a peptidoglycan and between N-acetyl-D-glucosamine residues in chitodextrins.</text>
        <dbReference type="EC" id="3.2.1.17"/>
    </reaction>
</comment>
<comment type="polymorphism">
    <text evidence="3">3 allelic variants of cecropia moth lysozyme have been found. The sequence shown is that of lysozyme 1.</text>
</comment>
<comment type="similarity">
    <text evidence="2">Belongs to the glycosyl hydrolase 22 family.</text>
</comment>
<comment type="sequence caution" evidence="4">
    <conflict type="erroneous initiation">
        <sequence resource="EMBL-CDS" id="AAA29190"/>
    </conflict>
</comment>
<comment type="sequence caution" evidence="4">
    <conflict type="erroneous initiation">
        <sequence resource="EMBL-CDS" id="CAA26542"/>
    </conflict>
</comment>
<dbReference type="EC" id="3.2.1.17"/>
<dbReference type="EMBL" id="M60914">
    <property type="protein sequence ID" value="AAA29189.1"/>
    <property type="molecule type" value="Genomic_DNA"/>
</dbReference>
<dbReference type="EMBL" id="X02765">
    <property type="protein sequence ID" value="CAA26542.1"/>
    <property type="status" value="ALT_INIT"/>
    <property type="molecule type" value="mRNA"/>
</dbReference>
<dbReference type="EMBL" id="M34923">
    <property type="protein sequence ID" value="AAA29190.1"/>
    <property type="status" value="ALT_INIT"/>
    <property type="molecule type" value="mRNA"/>
</dbReference>
<dbReference type="PIR" id="A24649">
    <property type="entry name" value="LZWK"/>
</dbReference>
<dbReference type="PIR" id="A38744">
    <property type="entry name" value="A38744"/>
</dbReference>
<dbReference type="SMR" id="P05105"/>
<dbReference type="CAZy" id="GH22">
    <property type="family name" value="Glycoside Hydrolase Family 22"/>
</dbReference>
<dbReference type="GO" id="GO:0003796">
    <property type="term" value="F:lysozyme activity"/>
    <property type="evidence" value="ECO:0007669"/>
    <property type="project" value="UniProtKB-EC"/>
</dbReference>
<dbReference type="GO" id="GO:0042742">
    <property type="term" value="P:defense response to bacterium"/>
    <property type="evidence" value="ECO:0007669"/>
    <property type="project" value="UniProtKB-KW"/>
</dbReference>
<dbReference type="GO" id="GO:0031640">
    <property type="term" value="P:killing of cells of another organism"/>
    <property type="evidence" value="ECO:0007669"/>
    <property type="project" value="UniProtKB-KW"/>
</dbReference>
<dbReference type="CDD" id="cd16899">
    <property type="entry name" value="LYZ_C_invert"/>
    <property type="match status" value="1"/>
</dbReference>
<dbReference type="FunFam" id="1.10.530.10:FF:000001">
    <property type="entry name" value="Lysozyme C"/>
    <property type="match status" value="1"/>
</dbReference>
<dbReference type="Gene3D" id="1.10.530.10">
    <property type="match status" value="1"/>
</dbReference>
<dbReference type="InterPro" id="IPR001916">
    <property type="entry name" value="Glyco_hydro_22"/>
</dbReference>
<dbReference type="InterPro" id="IPR019799">
    <property type="entry name" value="Glyco_hydro_22_CS"/>
</dbReference>
<dbReference type="InterPro" id="IPR000974">
    <property type="entry name" value="Glyco_hydro_22_lys"/>
</dbReference>
<dbReference type="InterPro" id="IPR023346">
    <property type="entry name" value="Lysozyme-like_dom_sf"/>
</dbReference>
<dbReference type="PANTHER" id="PTHR11407">
    <property type="entry name" value="LYSOZYME C"/>
    <property type="match status" value="1"/>
</dbReference>
<dbReference type="PANTHER" id="PTHR11407:SF63">
    <property type="entry name" value="LYSOZYME C"/>
    <property type="match status" value="1"/>
</dbReference>
<dbReference type="Pfam" id="PF00062">
    <property type="entry name" value="Lys"/>
    <property type="match status" value="1"/>
</dbReference>
<dbReference type="PRINTS" id="PR00137">
    <property type="entry name" value="LYSOZYME"/>
</dbReference>
<dbReference type="PRINTS" id="PR00135">
    <property type="entry name" value="LYZLACT"/>
</dbReference>
<dbReference type="SMART" id="SM00263">
    <property type="entry name" value="LYZ1"/>
    <property type="match status" value="1"/>
</dbReference>
<dbReference type="SUPFAM" id="SSF53955">
    <property type="entry name" value="Lysozyme-like"/>
    <property type="match status" value="1"/>
</dbReference>
<dbReference type="PROSITE" id="PS00128">
    <property type="entry name" value="GLYCOSYL_HYDROL_F22_1"/>
    <property type="match status" value="1"/>
</dbReference>
<dbReference type="PROSITE" id="PS51348">
    <property type="entry name" value="GLYCOSYL_HYDROL_F22_2"/>
    <property type="match status" value="1"/>
</dbReference>
<evidence type="ECO:0000250" key="1"/>
<evidence type="ECO:0000255" key="2">
    <source>
        <dbReference type="PROSITE-ProRule" id="PRU00680"/>
    </source>
</evidence>
<evidence type="ECO:0000269" key="3">
    <source>
    </source>
</evidence>
<evidence type="ECO:0000305" key="4"/>
<sequence length="139" mass="15877">MTKYVILLAVLAFALHCDAKRFTRCGLVQELRRLGFDETLMSNWVCLVENESGRFTDKIGKVNKNGSRDYGLFQINDKYWCSKGTTPGKDCNVTCNQLLTDDISVAATCAKKIYKRHKFDAWYGWKNHCQHGLPDISDC</sequence>
<proteinExistence type="evidence at transcript level"/>
<feature type="signal peptide" evidence="1">
    <location>
        <begin position="1"/>
        <end position="19"/>
    </location>
</feature>
<feature type="chain" id="PRO_0000018506" description="Lysozyme">
    <location>
        <begin position="20"/>
        <end position="139"/>
    </location>
</feature>
<feature type="domain" description="C-type lysozyme" evidence="2">
    <location>
        <begin position="20"/>
        <end position="139"/>
    </location>
</feature>
<feature type="active site" evidence="2">
    <location>
        <position position="51"/>
    </location>
</feature>
<feature type="active site" evidence="2">
    <location>
        <position position="69"/>
    </location>
</feature>
<feature type="disulfide bond" evidence="2">
    <location>
        <begin position="25"/>
        <end position="139"/>
    </location>
</feature>
<feature type="disulfide bond" evidence="2">
    <location>
        <begin position="46"/>
        <end position="129"/>
    </location>
</feature>
<feature type="disulfide bond" evidence="2">
    <location>
        <begin position="81"/>
        <end position="95"/>
    </location>
</feature>
<feature type="disulfide bond" evidence="2">
    <location>
        <begin position="91"/>
        <end position="109"/>
    </location>
</feature>
<feature type="sequence variant" description="In lysozyme-2.">
    <original>L</original>
    <variation>R</variation>
    <location>
        <position position="34"/>
    </location>
</feature>
<feature type="sequence variant" description="In lysozyme-2 and lysozyme-3.">
    <original>T</original>
    <variation>S</variation>
    <location>
        <position position="85"/>
    </location>
</feature>